<reference key="1">
    <citation type="submission" date="2007-03" db="EMBL/GenBank/DDBJ databases">
        <title>Complete sequence of Shewanella loihica PV-4.</title>
        <authorList>
            <consortium name="US DOE Joint Genome Institute"/>
            <person name="Copeland A."/>
            <person name="Lucas S."/>
            <person name="Lapidus A."/>
            <person name="Barry K."/>
            <person name="Detter J.C."/>
            <person name="Glavina del Rio T."/>
            <person name="Hammon N."/>
            <person name="Israni S."/>
            <person name="Dalin E."/>
            <person name="Tice H."/>
            <person name="Pitluck S."/>
            <person name="Chain P."/>
            <person name="Malfatti S."/>
            <person name="Shin M."/>
            <person name="Vergez L."/>
            <person name="Schmutz J."/>
            <person name="Larimer F."/>
            <person name="Land M."/>
            <person name="Hauser L."/>
            <person name="Kyrpides N."/>
            <person name="Mikhailova N."/>
            <person name="Romine M.F."/>
            <person name="Serres G."/>
            <person name="Fredrickson J."/>
            <person name="Tiedje J."/>
            <person name="Richardson P."/>
        </authorList>
    </citation>
    <scope>NUCLEOTIDE SEQUENCE [LARGE SCALE GENOMIC DNA]</scope>
    <source>
        <strain>ATCC BAA-1088 / PV-4</strain>
    </source>
</reference>
<protein>
    <recommendedName>
        <fullName evidence="1">Erythronate-4-phosphate dehydrogenase</fullName>
        <ecNumber evidence="1">1.1.1.290</ecNumber>
    </recommendedName>
</protein>
<proteinExistence type="inferred from homology"/>
<gene>
    <name evidence="1" type="primary">pdxB</name>
    <name type="ordered locus">Shew_2309</name>
</gene>
<keyword id="KW-0963">Cytoplasm</keyword>
<keyword id="KW-0520">NAD</keyword>
<keyword id="KW-0560">Oxidoreductase</keyword>
<keyword id="KW-0664">Pyridoxine biosynthesis</keyword>
<keyword id="KW-1185">Reference proteome</keyword>
<feature type="chain" id="PRO_0000297468" description="Erythronate-4-phosphate dehydrogenase">
    <location>
        <begin position="1"/>
        <end position="376"/>
    </location>
</feature>
<feature type="active site" evidence="1">
    <location>
        <position position="209"/>
    </location>
</feature>
<feature type="active site" evidence="1">
    <location>
        <position position="238"/>
    </location>
</feature>
<feature type="active site" description="Proton donor" evidence="1">
    <location>
        <position position="255"/>
    </location>
</feature>
<feature type="binding site" evidence="1">
    <location>
        <position position="45"/>
    </location>
    <ligand>
        <name>substrate</name>
    </ligand>
</feature>
<feature type="binding site" evidence="1">
    <location>
        <position position="67"/>
    </location>
    <ligand>
        <name>substrate</name>
    </ligand>
</feature>
<feature type="binding site" evidence="1">
    <location>
        <position position="147"/>
    </location>
    <ligand>
        <name>NAD(+)</name>
        <dbReference type="ChEBI" id="CHEBI:57540"/>
    </ligand>
</feature>
<feature type="binding site" evidence="1">
    <location>
        <position position="233"/>
    </location>
    <ligand>
        <name>NAD(+)</name>
        <dbReference type="ChEBI" id="CHEBI:57540"/>
    </ligand>
</feature>
<feature type="binding site" evidence="1">
    <location>
        <position position="258"/>
    </location>
    <ligand>
        <name>NAD(+)</name>
        <dbReference type="ChEBI" id="CHEBI:57540"/>
    </ligand>
</feature>
<feature type="binding site" evidence="1">
    <location>
        <position position="259"/>
    </location>
    <ligand>
        <name>substrate</name>
    </ligand>
</feature>
<evidence type="ECO:0000255" key="1">
    <source>
        <dbReference type="HAMAP-Rule" id="MF_01825"/>
    </source>
</evidence>
<comment type="function">
    <text evidence="1">Catalyzes the oxidation of erythronate-4-phosphate to 3-hydroxy-2-oxo-4-phosphonooxybutanoate.</text>
</comment>
<comment type="catalytic activity">
    <reaction evidence="1">
        <text>4-phospho-D-erythronate + NAD(+) = (R)-3-hydroxy-2-oxo-4-phosphooxybutanoate + NADH + H(+)</text>
        <dbReference type="Rhea" id="RHEA:18829"/>
        <dbReference type="ChEBI" id="CHEBI:15378"/>
        <dbReference type="ChEBI" id="CHEBI:57540"/>
        <dbReference type="ChEBI" id="CHEBI:57945"/>
        <dbReference type="ChEBI" id="CHEBI:58538"/>
        <dbReference type="ChEBI" id="CHEBI:58766"/>
        <dbReference type="EC" id="1.1.1.290"/>
    </reaction>
</comment>
<comment type="pathway">
    <text evidence="1">Cofactor biosynthesis; pyridoxine 5'-phosphate biosynthesis; pyridoxine 5'-phosphate from D-erythrose 4-phosphate: step 2/5.</text>
</comment>
<comment type="subunit">
    <text evidence="1">Homodimer.</text>
</comment>
<comment type="subcellular location">
    <subcellularLocation>
        <location evidence="1">Cytoplasm</location>
    </subcellularLocation>
</comment>
<comment type="similarity">
    <text evidence="1">Belongs to the D-isomer specific 2-hydroxyacid dehydrogenase family. PdxB subfamily.</text>
</comment>
<sequence>MKIVADENMPYVEALFADLGEVVMVDGRTLTQAQVKDADVLLVRSVTKVNKSLLDGCDRLSFVGSATIGMDHLDLDYLKQRGIFCTNAPGCNAVAVGEYAFNAMLELARRFHNPLKGKTVGIVGAGNTGTALQKCLEAYGVKTLLNDPLLEQSGDEREFVSLDELIERCDVISLHVPLTRDGEHPTHYLFDKRRLNALAEDTWLLNCCRGEVIDNRALIEVKQQRSDLKLVLDVWEGEPLPMPELVPLVEVATPHIAGYSLEGKARGTFMLYQALMAQLGRAVDKSLASLLPPLWSHQLSPLSVPDEKALLCLVRLVYDLRDDDELFRQRFQNNKGFDLMRKNHKHRREFSALMLANTAGSDVDWLLELGFSGVGL</sequence>
<accession>A3QFC7</accession>
<organism>
    <name type="scientific">Shewanella loihica (strain ATCC BAA-1088 / PV-4)</name>
    <dbReference type="NCBI Taxonomy" id="323850"/>
    <lineage>
        <taxon>Bacteria</taxon>
        <taxon>Pseudomonadati</taxon>
        <taxon>Pseudomonadota</taxon>
        <taxon>Gammaproteobacteria</taxon>
        <taxon>Alteromonadales</taxon>
        <taxon>Shewanellaceae</taxon>
        <taxon>Shewanella</taxon>
    </lineage>
</organism>
<name>PDXB_SHELP</name>
<dbReference type="EC" id="1.1.1.290" evidence="1"/>
<dbReference type="EMBL" id="CP000606">
    <property type="protein sequence ID" value="ABO24175.1"/>
    <property type="molecule type" value="Genomic_DNA"/>
</dbReference>
<dbReference type="RefSeq" id="WP_011866106.1">
    <property type="nucleotide sequence ID" value="NC_009092.1"/>
</dbReference>
<dbReference type="SMR" id="A3QFC7"/>
<dbReference type="STRING" id="323850.Shew_2309"/>
<dbReference type="KEGG" id="slo:Shew_2309"/>
<dbReference type="eggNOG" id="COG0111">
    <property type="taxonomic scope" value="Bacteria"/>
</dbReference>
<dbReference type="HOGENOM" id="CLU_019796_4_0_6"/>
<dbReference type="OrthoDB" id="9770208at2"/>
<dbReference type="UniPathway" id="UPA00244">
    <property type="reaction ID" value="UER00310"/>
</dbReference>
<dbReference type="Proteomes" id="UP000001558">
    <property type="component" value="Chromosome"/>
</dbReference>
<dbReference type="GO" id="GO:0005829">
    <property type="term" value="C:cytosol"/>
    <property type="evidence" value="ECO:0007669"/>
    <property type="project" value="TreeGrafter"/>
</dbReference>
<dbReference type="GO" id="GO:0033711">
    <property type="term" value="F:4-phosphoerythronate dehydrogenase activity"/>
    <property type="evidence" value="ECO:0007669"/>
    <property type="project" value="UniProtKB-EC"/>
</dbReference>
<dbReference type="GO" id="GO:0051287">
    <property type="term" value="F:NAD binding"/>
    <property type="evidence" value="ECO:0007669"/>
    <property type="project" value="InterPro"/>
</dbReference>
<dbReference type="GO" id="GO:0046983">
    <property type="term" value="F:protein dimerization activity"/>
    <property type="evidence" value="ECO:0007669"/>
    <property type="project" value="InterPro"/>
</dbReference>
<dbReference type="GO" id="GO:0036001">
    <property type="term" value="P:'de novo' pyridoxal 5'-phosphate biosynthetic process"/>
    <property type="evidence" value="ECO:0007669"/>
    <property type="project" value="TreeGrafter"/>
</dbReference>
<dbReference type="GO" id="GO:0008615">
    <property type="term" value="P:pyridoxine biosynthetic process"/>
    <property type="evidence" value="ECO:0007669"/>
    <property type="project" value="UniProtKB-UniRule"/>
</dbReference>
<dbReference type="CDD" id="cd12158">
    <property type="entry name" value="ErythrP_dh"/>
    <property type="match status" value="1"/>
</dbReference>
<dbReference type="Gene3D" id="3.30.1370.170">
    <property type="match status" value="1"/>
</dbReference>
<dbReference type="Gene3D" id="3.40.50.720">
    <property type="entry name" value="NAD(P)-binding Rossmann-like Domain"/>
    <property type="match status" value="2"/>
</dbReference>
<dbReference type="HAMAP" id="MF_01825">
    <property type="entry name" value="PdxB"/>
    <property type="match status" value="1"/>
</dbReference>
<dbReference type="InterPro" id="IPR006139">
    <property type="entry name" value="D-isomer_2_OHA_DH_cat_dom"/>
</dbReference>
<dbReference type="InterPro" id="IPR029753">
    <property type="entry name" value="D-isomer_DH_CS"/>
</dbReference>
<dbReference type="InterPro" id="IPR006140">
    <property type="entry name" value="D-isomer_DH_NAD-bd"/>
</dbReference>
<dbReference type="InterPro" id="IPR020921">
    <property type="entry name" value="Erythronate-4-P_DHase"/>
</dbReference>
<dbReference type="InterPro" id="IPR024531">
    <property type="entry name" value="Erythronate-4-P_DHase_dimer"/>
</dbReference>
<dbReference type="InterPro" id="IPR036291">
    <property type="entry name" value="NAD(P)-bd_dom_sf"/>
</dbReference>
<dbReference type="InterPro" id="IPR038251">
    <property type="entry name" value="PdxB_dimer_sf"/>
</dbReference>
<dbReference type="PANTHER" id="PTHR42938">
    <property type="entry name" value="FORMATE DEHYDROGENASE 1"/>
    <property type="match status" value="1"/>
</dbReference>
<dbReference type="PANTHER" id="PTHR42938:SF9">
    <property type="entry name" value="FORMATE DEHYDROGENASE 1"/>
    <property type="match status" value="1"/>
</dbReference>
<dbReference type="Pfam" id="PF00389">
    <property type="entry name" value="2-Hacid_dh"/>
    <property type="match status" value="1"/>
</dbReference>
<dbReference type="Pfam" id="PF02826">
    <property type="entry name" value="2-Hacid_dh_C"/>
    <property type="match status" value="1"/>
</dbReference>
<dbReference type="Pfam" id="PF11890">
    <property type="entry name" value="DUF3410"/>
    <property type="match status" value="1"/>
</dbReference>
<dbReference type="SUPFAM" id="SSF52283">
    <property type="entry name" value="Formate/glycerate dehydrogenase catalytic domain-like"/>
    <property type="match status" value="1"/>
</dbReference>
<dbReference type="SUPFAM" id="SSF51735">
    <property type="entry name" value="NAD(P)-binding Rossmann-fold domains"/>
    <property type="match status" value="1"/>
</dbReference>
<dbReference type="PROSITE" id="PS00671">
    <property type="entry name" value="D_2_HYDROXYACID_DH_3"/>
    <property type="match status" value="1"/>
</dbReference>